<evidence type="ECO:0000250" key="1"/>
<evidence type="ECO:0000255" key="2">
    <source>
        <dbReference type="HAMAP-Rule" id="MF_00062"/>
    </source>
</evidence>
<protein>
    <recommendedName>
        <fullName evidence="2">Sulfate adenylyltransferase subunit 1</fullName>
        <ecNumber evidence="2">2.7.7.4</ecNumber>
    </recommendedName>
    <alternativeName>
        <fullName evidence="2">ATP-sulfurylase large subunit</fullName>
    </alternativeName>
    <alternativeName>
        <fullName evidence="2">Sulfate adenylate transferase</fullName>
        <shortName evidence="2">SAT</shortName>
    </alternativeName>
</protein>
<feature type="chain" id="PRO_0000091523" description="Sulfate adenylyltransferase subunit 1">
    <location>
        <begin position="1"/>
        <end position="475"/>
    </location>
</feature>
<feature type="domain" description="tr-type G">
    <location>
        <begin position="25"/>
        <end position="239"/>
    </location>
</feature>
<feature type="region of interest" description="G1" evidence="1">
    <location>
        <begin position="34"/>
        <end position="41"/>
    </location>
</feature>
<feature type="region of interest" description="G2" evidence="1">
    <location>
        <begin position="92"/>
        <end position="96"/>
    </location>
</feature>
<feature type="region of interest" description="G3" evidence="1">
    <location>
        <begin position="113"/>
        <end position="116"/>
    </location>
</feature>
<feature type="region of interest" description="G4" evidence="1">
    <location>
        <begin position="168"/>
        <end position="171"/>
    </location>
</feature>
<feature type="region of interest" description="G5" evidence="1">
    <location>
        <begin position="206"/>
        <end position="208"/>
    </location>
</feature>
<feature type="binding site" evidence="2">
    <location>
        <begin position="34"/>
        <end position="41"/>
    </location>
    <ligand>
        <name>GTP</name>
        <dbReference type="ChEBI" id="CHEBI:37565"/>
    </ligand>
</feature>
<feature type="binding site" evidence="2">
    <location>
        <begin position="113"/>
        <end position="117"/>
    </location>
    <ligand>
        <name>GTP</name>
        <dbReference type="ChEBI" id="CHEBI:37565"/>
    </ligand>
</feature>
<feature type="binding site" evidence="2">
    <location>
        <begin position="168"/>
        <end position="171"/>
    </location>
    <ligand>
        <name>GTP</name>
        <dbReference type="ChEBI" id="CHEBI:37565"/>
    </ligand>
</feature>
<sequence length="475" mass="52539">MNTALAQQIANEGGVEAWMIAQQHKSLLRFLTCGSVDDGKSTLIGRLLHDTRQIYEDQLSSLHNDSKRHGTQGEKLDLALLVDGLQAEREQGITIDVAYRYFSTEKRKFIIADTPGHEQYTRNMATGASTCELAILLIDARKGVLDQTRRHSFISTLLGIKHLVVAINKMDLVDYSEETFTRIREDYLTFAGQLPGNLDIRFVPLSALEGDNVASQSESMPWYSGPTLLEVLETVEIQRVVDAQPMRFPVQYVNRPNLDFRGYAGTLASGRVEVGQRVKVLPSGVESNVARIVTFDGDREEAFAGEAITLVLTDEIDISRGDLLLAADEALPAVQSASVDVVWMAEQPLSPGQSYDIKIAGKKTRARVDGIHYQVDINNLTQREVENLPLNGIGLVDLTFDEPLVLDRYQQNPVTGGLIFIDRLSNVTVGAGMVHEPVSQATAAPSEFSAFELELNALVRRHFPHWGARDLLGDK</sequence>
<name>CYSN_ECOL6</name>
<dbReference type="EC" id="2.7.7.4" evidence="2"/>
<dbReference type="EMBL" id="AE014075">
    <property type="protein sequence ID" value="AAN81767.1"/>
    <property type="molecule type" value="Genomic_DNA"/>
</dbReference>
<dbReference type="RefSeq" id="WP_001090357.1">
    <property type="nucleotide sequence ID" value="NZ_CP051263.1"/>
</dbReference>
<dbReference type="SMR" id="Q8FEJ1"/>
<dbReference type="STRING" id="199310.c3318"/>
<dbReference type="KEGG" id="ecc:c3318"/>
<dbReference type="eggNOG" id="COG2895">
    <property type="taxonomic scope" value="Bacteria"/>
</dbReference>
<dbReference type="HOGENOM" id="CLU_007265_5_2_6"/>
<dbReference type="BioCyc" id="ECOL199310:C3318-MONOMER"/>
<dbReference type="UniPathway" id="UPA00140">
    <property type="reaction ID" value="UER00204"/>
</dbReference>
<dbReference type="Proteomes" id="UP000001410">
    <property type="component" value="Chromosome"/>
</dbReference>
<dbReference type="GO" id="GO:0005524">
    <property type="term" value="F:ATP binding"/>
    <property type="evidence" value="ECO:0007669"/>
    <property type="project" value="UniProtKB-KW"/>
</dbReference>
<dbReference type="GO" id="GO:0005525">
    <property type="term" value="F:GTP binding"/>
    <property type="evidence" value="ECO:0007669"/>
    <property type="project" value="UniProtKB-UniRule"/>
</dbReference>
<dbReference type="GO" id="GO:0003924">
    <property type="term" value="F:GTPase activity"/>
    <property type="evidence" value="ECO:0007669"/>
    <property type="project" value="InterPro"/>
</dbReference>
<dbReference type="GO" id="GO:0004781">
    <property type="term" value="F:sulfate adenylyltransferase (ATP) activity"/>
    <property type="evidence" value="ECO:0007669"/>
    <property type="project" value="UniProtKB-UniRule"/>
</dbReference>
<dbReference type="GO" id="GO:0070814">
    <property type="term" value="P:hydrogen sulfide biosynthetic process"/>
    <property type="evidence" value="ECO:0007669"/>
    <property type="project" value="UniProtKB-UniRule"/>
</dbReference>
<dbReference type="GO" id="GO:0000103">
    <property type="term" value="P:sulfate assimilation"/>
    <property type="evidence" value="ECO:0007669"/>
    <property type="project" value="UniProtKB-UniRule"/>
</dbReference>
<dbReference type="CDD" id="cd04166">
    <property type="entry name" value="CysN_ATPS"/>
    <property type="match status" value="1"/>
</dbReference>
<dbReference type="CDD" id="cd03695">
    <property type="entry name" value="CysN_NodQ_II"/>
    <property type="match status" value="1"/>
</dbReference>
<dbReference type="CDD" id="cd04095">
    <property type="entry name" value="CysN_NoDQ_III"/>
    <property type="match status" value="1"/>
</dbReference>
<dbReference type="FunFam" id="2.40.30.10:FF:000027">
    <property type="entry name" value="Sulfate adenylyltransferase subunit 1"/>
    <property type="match status" value="1"/>
</dbReference>
<dbReference type="FunFam" id="2.40.30.10:FF:000031">
    <property type="entry name" value="Sulfate adenylyltransferase subunit 1"/>
    <property type="match status" value="1"/>
</dbReference>
<dbReference type="FunFam" id="3.40.50.300:FF:000119">
    <property type="entry name" value="Sulfate adenylyltransferase subunit 1"/>
    <property type="match status" value="1"/>
</dbReference>
<dbReference type="Gene3D" id="3.40.50.300">
    <property type="entry name" value="P-loop containing nucleotide triphosphate hydrolases"/>
    <property type="match status" value="1"/>
</dbReference>
<dbReference type="Gene3D" id="2.40.30.10">
    <property type="entry name" value="Translation factors"/>
    <property type="match status" value="2"/>
</dbReference>
<dbReference type="HAMAP" id="MF_00062">
    <property type="entry name" value="Sulf_adenylyltr_sub1"/>
    <property type="match status" value="1"/>
</dbReference>
<dbReference type="InterPro" id="IPR041757">
    <property type="entry name" value="CysN_GTP-bd"/>
</dbReference>
<dbReference type="InterPro" id="IPR044138">
    <property type="entry name" value="CysN_II"/>
</dbReference>
<dbReference type="InterPro" id="IPR044139">
    <property type="entry name" value="CysN_NoDQ_III"/>
</dbReference>
<dbReference type="InterPro" id="IPR031157">
    <property type="entry name" value="G_TR_CS"/>
</dbReference>
<dbReference type="InterPro" id="IPR054696">
    <property type="entry name" value="GTP-eEF1A_C"/>
</dbReference>
<dbReference type="InterPro" id="IPR027417">
    <property type="entry name" value="P-loop_NTPase"/>
</dbReference>
<dbReference type="InterPro" id="IPR005225">
    <property type="entry name" value="Small_GTP-bd"/>
</dbReference>
<dbReference type="InterPro" id="IPR011779">
    <property type="entry name" value="SO4_adenylTrfase_lsu"/>
</dbReference>
<dbReference type="InterPro" id="IPR000795">
    <property type="entry name" value="T_Tr_GTP-bd_dom"/>
</dbReference>
<dbReference type="InterPro" id="IPR050100">
    <property type="entry name" value="TRAFAC_GTPase_members"/>
</dbReference>
<dbReference type="InterPro" id="IPR009000">
    <property type="entry name" value="Transl_B-barrel_sf"/>
</dbReference>
<dbReference type="InterPro" id="IPR009001">
    <property type="entry name" value="Transl_elong_EF1A/Init_IF2_C"/>
</dbReference>
<dbReference type="NCBIfam" id="TIGR02034">
    <property type="entry name" value="CysN"/>
    <property type="match status" value="1"/>
</dbReference>
<dbReference type="NCBIfam" id="NF003478">
    <property type="entry name" value="PRK05124.1"/>
    <property type="match status" value="1"/>
</dbReference>
<dbReference type="NCBIfam" id="TIGR00231">
    <property type="entry name" value="small_GTP"/>
    <property type="match status" value="1"/>
</dbReference>
<dbReference type="PANTHER" id="PTHR23115">
    <property type="entry name" value="TRANSLATION FACTOR"/>
    <property type="match status" value="1"/>
</dbReference>
<dbReference type="Pfam" id="PF22594">
    <property type="entry name" value="GTP-eEF1A_C"/>
    <property type="match status" value="1"/>
</dbReference>
<dbReference type="Pfam" id="PF00009">
    <property type="entry name" value="GTP_EFTU"/>
    <property type="match status" value="1"/>
</dbReference>
<dbReference type="PRINTS" id="PR00315">
    <property type="entry name" value="ELONGATNFCT"/>
</dbReference>
<dbReference type="SUPFAM" id="SSF50465">
    <property type="entry name" value="EF-Tu/eEF-1alpha/eIF2-gamma C-terminal domain"/>
    <property type="match status" value="1"/>
</dbReference>
<dbReference type="SUPFAM" id="SSF52540">
    <property type="entry name" value="P-loop containing nucleoside triphosphate hydrolases"/>
    <property type="match status" value="1"/>
</dbReference>
<dbReference type="SUPFAM" id="SSF50447">
    <property type="entry name" value="Translation proteins"/>
    <property type="match status" value="1"/>
</dbReference>
<dbReference type="PROSITE" id="PS00301">
    <property type="entry name" value="G_TR_1"/>
    <property type="match status" value="1"/>
</dbReference>
<dbReference type="PROSITE" id="PS51722">
    <property type="entry name" value="G_TR_2"/>
    <property type="match status" value="1"/>
</dbReference>
<organism>
    <name type="scientific">Escherichia coli O6:H1 (strain CFT073 / ATCC 700928 / UPEC)</name>
    <dbReference type="NCBI Taxonomy" id="199310"/>
    <lineage>
        <taxon>Bacteria</taxon>
        <taxon>Pseudomonadati</taxon>
        <taxon>Pseudomonadota</taxon>
        <taxon>Gammaproteobacteria</taxon>
        <taxon>Enterobacterales</taxon>
        <taxon>Enterobacteriaceae</taxon>
        <taxon>Escherichia</taxon>
    </lineage>
</organism>
<proteinExistence type="inferred from homology"/>
<reference key="1">
    <citation type="journal article" date="2002" name="Proc. Natl. Acad. Sci. U.S.A.">
        <title>Extensive mosaic structure revealed by the complete genome sequence of uropathogenic Escherichia coli.</title>
        <authorList>
            <person name="Welch R.A."/>
            <person name="Burland V."/>
            <person name="Plunkett G. III"/>
            <person name="Redford P."/>
            <person name="Roesch P."/>
            <person name="Rasko D."/>
            <person name="Buckles E.L."/>
            <person name="Liou S.-R."/>
            <person name="Boutin A."/>
            <person name="Hackett J."/>
            <person name="Stroud D."/>
            <person name="Mayhew G.F."/>
            <person name="Rose D.J."/>
            <person name="Zhou S."/>
            <person name="Schwartz D.C."/>
            <person name="Perna N.T."/>
            <person name="Mobley H.L.T."/>
            <person name="Donnenberg M.S."/>
            <person name="Blattner F.R."/>
        </authorList>
    </citation>
    <scope>NUCLEOTIDE SEQUENCE [LARGE SCALE GENOMIC DNA]</scope>
    <source>
        <strain>CFT073 / ATCC 700928 / UPEC</strain>
    </source>
</reference>
<keyword id="KW-0067">ATP-binding</keyword>
<keyword id="KW-0342">GTP-binding</keyword>
<keyword id="KW-0547">Nucleotide-binding</keyword>
<keyword id="KW-0548">Nucleotidyltransferase</keyword>
<keyword id="KW-1185">Reference proteome</keyword>
<keyword id="KW-0808">Transferase</keyword>
<comment type="function">
    <text evidence="2">With CysD forms the ATP sulfurylase (ATPS) that catalyzes the adenylation of sulfate producing adenosine 5'-phosphosulfate (APS) and diphosphate, the first enzymatic step in sulfur assimilation pathway. APS synthesis involves the formation of a high-energy phosphoric-sulfuric acid anhydride bond driven by GTP hydrolysis by CysN coupled to ATP hydrolysis by CysD.</text>
</comment>
<comment type="catalytic activity">
    <reaction evidence="2">
        <text>sulfate + ATP + H(+) = adenosine 5'-phosphosulfate + diphosphate</text>
        <dbReference type="Rhea" id="RHEA:18133"/>
        <dbReference type="ChEBI" id="CHEBI:15378"/>
        <dbReference type="ChEBI" id="CHEBI:16189"/>
        <dbReference type="ChEBI" id="CHEBI:30616"/>
        <dbReference type="ChEBI" id="CHEBI:33019"/>
        <dbReference type="ChEBI" id="CHEBI:58243"/>
        <dbReference type="EC" id="2.7.7.4"/>
    </reaction>
</comment>
<comment type="pathway">
    <text evidence="2">Sulfur metabolism; hydrogen sulfide biosynthesis; sulfite from sulfate: step 1/3.</text>
</comment>
<comment type="subunit">
    <text evidence="2">Heterodimer composed of CysD, the smaller subunit, and CysN.</text>
</comment>
<comment type="similarity">
    <text evidence="2">Belongs to the TRAFAC class translation factor GTPase superfamily. Classic translation factor GTPase family. CysN/NodQ subfamily.</text>
</comment>
<accession>Q8FEJ1</accession>
<gene>
    <name evidence="2" type="primary">cysN</name>
    <name type="ordered locus">c3318</name>
</gene>